<gene>
    <name type="ordered locus">PA1295</name>
</gene>
<protein>
    <recommendedName>
        <fullName evidence="1">YcgL domain-containing protein PA1295</fullName>
    </recommendedName>
</protein>
<keyword id="KW-1185">Reference proteome</keyword>
<evidence type="ECO:0000255" key="1">
    <source>
        <dbReference type="HAMAP-Rule" id="MF_01866"/>
    </source>
</evidence>
<dbReference type="EMBL" id="AE004091">
    <property type="protein sequence ID" value="AAG04684.1"/>
    <property type="molecule type" value="Genomic_DNA"/>
</dbReference>
<dbReference type="PIR" id="B83483">
    <property type="entry name" value="B83483"/>
</dbReference>
<dbReference type="RefSeq" id="NP_249986.1">
    <property type="nucleotide sequence ID" value="NC_002516.2"/>
</dbReference>
<dbReference type="RefSeq" id="WP_003100122.1">
    <property type="nucleotide sequence ID" value="NZ_QZGE01000005.1"/>
</dbReference>
<dbReference type="SMR" id="Q9I449"/>
<dbReference type="FunCoup" id="Q9I449">
    <property type="interactions" value="120"/>
</dbReference>
<dbReference type="STRING" id="208964.PA1295"/>
<dbReference type="PaxDb" id="208964-PA1295"/>
<dbReference type="GeneID" id="881558"/>
<dbReference type="KEGG" id="pae:PA1295"/>
<dbReference type="PATRIC" id="fig|208964.12.peg.1346"/>
<dbReference type="PseudoCAP" id="PA1295"/>
<dbReference type="HOGENOM" id="CLU_155118_2_0_6"/>
<dbReference type="InParanoid" id="Q9I449"/>
<dbReference type="OrthoDB" id="7062382at2"/>
<dbReference type="PhylomeDB" id="Q9I449"/>
<dbReference type="BioCyc" id="PAER208964:G1FZ6-1320-MONOMER"/>
<dbReference type="Proteomes" id="UP000002438">
    <property type="component" value="Chromosome"/>
</dbReference>
<dbReference type="Gene3D" id="3.10.510.20">
    <property type="entry name" value="YcgL domain"/>
    <property type="match status" value="1"/>
</dbReference>
<dbReference type="HAMAP" id="MF_01866">
    <property type="entry name" value="UPF0745"/>
    <property type="match status" value="1"/>
</dbReference>
<dbReference type="InterPro" id="IPR038068">
    <property type="entry name" value="YcgL-like_sf"/>
</dbReference>
<dbReference type="InterPro" id="IPR027354">
    <property type="entry name" value="YcgL_dom"/>
</dbReference>
<dbReference type="PANTHER" id="PTHR38109">
    <property type="entry name" value="PROTEIN YCGL"/>
    <property type="match status" value="1"/>
</dbReference>
<dbReference type="PANTHER" id="PTHR38109:SF1">
    <property type="entry name" value="PROTEIN YCGL"/>
    <property type="match status" value="1"/>
</dbReference>
<dbReference type="Pfam" id="PF05166">
    <property type="entry name" value="YcgL"/>
    <property type="match status" value="1"/>
</dbReference>
<dbReference type="SUPFAM" id="SSF160191">
    <property type="entry name" value="YcgL-like"/>
    <property type="match status" value="1"/>
</dbReference>
<dbReference type="PROSITE" id="PS51648">
    <property type="entry name" value="YCGL"/>
    <property type="match status" value="1"/>
</dbReference>
<reference key="1">
    <citation type="journal article" date="2000" name="Nature">
        <title>Complete genome sequence of Pseudomonas aeruginosa PAO1, an opportunistic pathogen.</title>
        <authorList>
            <person name="Stover C.K."/>
            <person name="Pham X.-Q.T."/>
            <person name="Erwin A.L."/>
            <person name="Mizoguchi S.D."/>
            <person name="Warrener P."/>
            <person name="Hickey M.J."/>
            <person name="Brinkman F.S.L."/>
            <person name="Hufnagle W.O."/>
            <person name="Kowalik D.J."/>
            <person name="Lagrou M."/>
            <person name="Garber R.L."/>
            <person name="Goltry L."/>
            <person name="Tolentino E."/>
            <person name="Westbrock-Wadman S."/>
            <person name="Yuan Y."/>
            <person name="Brody L.L."/>
            <person name="Coulter S.N."/>
            <person name="Folger K.R."/>
            <person name="Kas A."/>
            <person name="Larbig K."/>
            <person name="Lim R.M."/>
            <person name="Smith K.A."/>
            <person name="Spencer D.H."/>
            <person name="Wong G.K.-S."/>
            <person name="Wu Z."/>
            <person name="Paulsen I.T."/>
            <person name="Reizer J."/>
            <person name="Saier M.H. Jr."/>
            <person name="Hancock R.E.W."/>
            <person name="Lory S."/>
            <person name="Olson M.V."/>
        </authorList>
    </citation>
    <scope>NUCLEOTIDE SEQUENCE [LARGE SCALE GENOMIC DNA]</scope>
    <source>
        <strain>ATCC 15692 / DSM 22644 / CIP 104116 / JCM 14847 / LMG 12228 / 1C / PRS 101 / PAO1</strain>
    </source>
</reference>
<feature type="chain" id="PRO_0000375327" description="YcgL domain-containing protein PA1295">
    <location>
        <begin position="1"/>
        <end position="97"/>
    </location>
</feature>
<feature type="domain" description="YcgL" evidence="1">
    <location>
        <begin position="3"/>
        <end position="87"/>
    </location>
</feature>
<name>Y1295_PSEAE</name>
<organism>
    <name type="scientific">Pseudomonas aeruginosa (strain ATCC 15692 / DSM 22644 / CIP 104116 / JCM 14847 / LMG 12228 / 1C / PRS 101 / PAO1)</name>
    <dbReference type="NCBI Taxonomy" id="208964"/>
    <lineage>
        <taxon>Bacteria</taxon>
        <taxon>Pseudomonadati</taxon>
        <taxon>Pseudomonadota</taxon>
        <taxon>Gammaproteobacteria</taxon>
        <taxon>Pseudomonadales</taxon>
        <taxon>Pseudomonadaceae</taxon>
        <taxon>Pseudomonas</taxon>
    </lineage>
</organism>
<accession>Q9I449</accession>
<sequence length="97" mass="11361">MKRICSVYKSPRKSEMYLYVDKREALSRVPEALLVPFGAPQHVFDLLLTPERQLAREDVAKVLENIEKQGFHLQMPPGEEEYIEHLPEELLRMNDPL</sequence>
<proteinExistence type="inferred from homology"/>